<dbReference type="EMBL" id="AE017244">
    <property type="protein sequence ID" value="AAZ54020.1"/>
    <property type="molecule type" value="Genomic_DNA"/>
</dbReference>
<dbReference type="SMR" id="Q4A769"/>
<dbReference type="KEGG" id="mhp:MHP7448_0658"/>
<dbReference type="HOGENOM" id="CLU_190949_0_1_14"/>
<dbReference type="Proteomes" id="UP000000553">
    <property type="component" value="Chromosome"/>
</dbReference>
<dbReference type="GO" id="GO:0005737">
    <property type="term" value="C:cytoplasm"/>
    <property type="evidence" value="ECO:0007669"/>
    <property type="project" value="UniProtKB-ARBA"/>
</dbReference>
<dbReference type="GO" id="GO:1990904">
    <property type="term" value="C:ribonucleoprotein complex"/>
    <property type="evidence" value="ECO:0007669"/>
    <property type="project" value="UniProtKB-KW"/>
</dbReference>
<dbReference type="GO" id="GO:0005840">
    <property type="term" value="C:ribosome"/>
    <property type="evidence" value="ECO:0007669"/>
    <property type="project" value="UniProtKB-KW"/>
</dbReference>
<dbReference type="GO" id="GO:0003735">
    <property type="term" value="F:structural constituent of ribosome"/>
    <property type="evidence" value="ECO:0007669"/>
    <property type="project" value="InterPro"/>
</dbReference>
<dbReference type="GO" id="GO:0006412">
    <property type="term" value="P:translation"/>
    <property type="evidence" value="ECO:0007669"/>
    <property type="project" value="UniProtKB-UniRule"/>
</dbReference>
<dbReference type="Gene3D" id="2.20.28.120">
    <property type="entry name" value="Ribosomal protein L33"/>
    <property type="match status" value="1"/>
</dbReference>
<dbReference type="HAMAP" id="MF_00294">
    <property type="entry name" value="Ribosomal_bL33"/>
    <property type="match status" value="1"/>
</dbReference>
<dbReference type="InterPro" id="IPR001705">
    <property type="entry name" value="Ribosomal_bL33"/>
</dbReference>
<dbReference type="InterPro" id="IPR018264">
    <property type="entry name" value="Ribosomal_bL33_CS"/>
</dbReference>
<dbReference type="InterPro" id="IPR038584">
    <property type="entry name" value="Ribosomal_bL33_sf"/>
</dbReference>
<dbReference type="InterPro" id="IPR011332">
    <property type="entry name" value="Ribosomal_zn-bd"/>
</dbReference>
<dbReference type="NCBIfam" id="NF001764">
    <property type="entry name" value="PRK00504.1"/>
    <property type="match status" value="1"/>
</dbReference>
<dbReference type="NCBIfam" id="NF001860">
    <property type="entry name" value="PRK00595.1"/>
    <property type="match status" value="1"/>
</dbReference>
<dbReference type="NCBIfam" id="TIGR01023">
    <property type="entry name" value="rpmG_bact"/>
    <property type="match status" value="1"/>
</dbReference>
<dbReference type="PANTHER" id="PTHR43168">
    <property type="entry name" value="50S RIBOSOMAL PROTEIN L33, CHLOROPLASTIC"/>
    <property type="match status" value="1"/>
</dbReference>
<dbReference type="PANTHER" id="PTHR43168:SF2">
    <property type="entry name" value="LARGE RIBOSOMAL SUBUNIT PROTEIN BL33C"/>
    <property type="match status" value="1"/>
</dbReference>
<dbReference type="Pfam" id="PF00471">
    <property type="entry name" value="Ribosomal_L33"/>
    <property type="match status" value="1"/>
</dbReference>
<dbReference type="SUPFAM" id="SSF57829">
    <property type="entry name" value="Zn-binding ribosomal proteins"/>
    <property type="match status" value="1"/>
</dbReference>
<dbReference type="PROSITE" id="PS00582">
    <property type="entry name" value="RIBOSOMAL_L33"/>
    <property type="match status" value="1"/>
</dbReference>
<sequence length="50" mass="6038">MAREGLTLRCTDCKMENYITKKNKKTKPEKIEVKKHCHKCNKHTLHREKK</sequence>
<feature type="chain" id="PRO_0000356575" description="Large ribosomal subunit protein bL33B">
    <location>
        <begin position="1"/>
        <end position="50"/>
    </location>
</feature>
<gene>
    <name evidence="1" type="primary">rpmG2</name>
    <name type="ordered locus">MHP7448_0658</name>
</gene>
<proteinExistence type="inferred from homology"/>
<organism>
    <name type="scientific">Mesomycoplasma hyopneumoniae (strain 7448)</name>
    <name type="common">Mycoplasma hyopneumoniae</name>
    <dbReference type="NCBI Taxonomy" id="262722"/>
    <lineage>
        <taxon>Bacteria</taxon>
        <taxon>Bacillati</taxon>
        <taxon>Mycoplasmatota</taxon>
        <taxon>Mycoplasmoidales</taxon>
        <taxon>Metamycoplasmataceae</taxon>
        <taxon>Mesomycoplasma</taxon>
    </lineage>
</organism>
<evidence type="ECO:0000255" key="1">
    <source>
        <dbReference type="HAMAP-Rule" id="MF_00294"/>
    </source>
</evidence>
<comment type="similarity">
    <text evidence="1">Belongs to the bacterial ribosomal protein bL33 family.</text>
</comment>
<protein>
    <recommendedName>
        <fullName evidence="1">Large ribosomal subunit protein bL33B</fullName>
    </recommendedName>
    <alternativeName>
        <fullName evidence="1">50S ribosomal protein L33 2</fullName>
    </alternativeName>
</protein>
<accession>Q4A769</accession>
<reference key="1">
    <citation type="journal article" date="2005" name="J. Bacteriol.">
        <title>Swine and poultry pathogens: the complete genome sequences of two strains of Mycoplasma hyopneumoniae and a strain of Mycoplasma synoviae.</title>
        <authorList>
            <person name="Vasconcelos A.T.R."/>
            <person name="Ferreira H.B."/>
            <person name="Bizarro C.V."/>
            <person name="Bonatto S.L."/>
            <person name="Carvalho M.O."/>
            <person name="Pinto P.M."/>
            <person name="Almeida D.F."/>
            <person name="Almeida L.G.P."/>
            <person name="Almeida R."/>
            <person name="Alves-Junior L."/>
            <person name="Assuncao E.N."/>
            <person name="Azevedo V.A.C."/>
            <person name="Bogo M.R."/>
            <person name="Brigido M.M."/>
            <person name="Brocchi M."/>
            <person name="Burity H.A."/>
            <person name="Camargo A.A."/>
            <person name="Camargo S.S."/>
            <person name="Carepo M.S."/>
            <person name="Carraro D.M."/>
            <person name="de Mattos Cascardo J.C."/>
            <person name="Castro L.A."/>
            <person name="Cavalcanti G."/>
            <person name="Chemale G."/>
            <person name="Collevatti R.G."/>
            <person name="Cunha C.W."/>
            <person name="Dallagiovanna B."/>
            <person name="Dambros B.P."/>
            <person name="Dellagostin O.A."/>
            <person name="Falcao C."/>
            <person name="Fantinatti-Garboggini F."/>
            <person name="Felipe M.S.S."/>
            <person name="Fiorentin L."/>
            <person name="Franco G.R."/>
            <person name="Freitas N.S.A."/>
            <person name="Frias D."/>
            <person name="Grangeiro T.B."/>
            <person name="Grisard E.C."/>
            <person name="Guimaraes C.T."/>
            <person name="Hungria M."/>
            <person name="Jardim S.N."/>
            <person name="Krieger M.A."/>
            <person name="Laurino J.P."/>
            <person name="Lima L.F.A."/>
            <person name="Lopes M.I."/>
            <person name="Loreto E.L.S."/>
            <person name="Madeira H.M.F."/>
            <person name="Manfio G.P."/>
            <person name="Maranhao A.Q."/>
            <person name="Martinkovics C.T."/>
            <person name="Medeiros S.R.B."/>
            <person name="Moreira M.A.M."/>
            <person name="Neiva M."/>
            <person name="Ramalho-Neto C.E."/>
            <person name="Nicolas M.F."/>
            <person name="Oliveira S.C."/>
            <person name="Paixao R.F.C."/>
            <person name="Pedrosa F.O."/>
            <person name="Pena S.D.J."/>
            <person name="Pereira M."/>
            <person name="Pereira-Ferrari L."/>
            <person name="Piffer I."/>
            <person name="Pinto L.S."/>
            <person name="Potrich D.P."/>
            <person name="Salim A.C.M."/>
            <person name="Santos F.R."/>
            <person name="Schmitt R."/>
            <person name="Schneider M.P.C."/>
            <person name="Schrank A."/>
            <person name="Schrank I.S."/>
            <person name="Schuck A.F."/>
            <person name="Seuanez H.N."/>
            <person name="Silva D.W."/>
            <person name="Silva R."/>
            <person name="Silva S.C."/>
            <person name="Soares C.M.A."/>
            <person name="Souza K.R.L."/>
            <person name="Souza R.C."/>
            <person name="Staats C.C."/>
            <person name="Steffens M.B.R."/>
            <person name="Teixeira S.M.R."/>
            <person name="Urmenyi T.P."/>
            <person name="Vainstein M.H."/>
            <person name="Zuccherato L.W."/>
            <person name="Simpson A.J.G."/>
            <person name="Zaha A."/>
        </authorList>
    </citation>
    <scope>NUCLEOTIDE SEQUENCE [LARGE SCALE GENOMIC DNA]</scope>
    <source>
        <strain>7448</strain>
    </source>
</reference>
<name>RL332_MESH7</name>
<keyword id="KW-0687">Ribonucleoprotein</keyword>
<keyword id="KW-0689">Ribosomal protein</keyword>